<evidence type="ECO:0000255" key="1"/>
<evidence type="ECO:0000256" key="2">
    <source>
        <dbReference type="SAM" id="MobiDB-lite"/>
    </source>
</evidence>
<evidence type="ECO:0000305" key="3"/>
<accession>Q92275</accession>
<accession>P87022</accession>
<dbReference type="EMBL" id="X94996">
    <property type="protein sequence ID" value="CAA64453.1"/>
    <property type="molecule type" value="Genomic_DNA"/>
</dbReference>
<dbReference type="EMBL" id="X77949">
    <property type="protein sequence ID" value="CAA54915.1"/>
    <property type="molecule type" value="Genomic_DNA"/>
</dbReference>
<dbReference type="PIR" id="S61919">
    <property type="entry name" value="S61919"/>
</dbReference>
<dbReference type="VEuPathDB" id="FungiDB:SCHCODRAFT_01034973"/>
<dbReference type="GO" id="GO:0005886">
    <property type="term" value="C:plasma membrane"/>
    <property type="evidence" value="ECO:0007669"/>
    <property type="project" value="TreeGrafter"/>
</dbReference>
<dbReference type="GO" id="GO:0004934">
    <property type="term" value="F:mating-type alpha-factor pheromone receptor activity"/>
    <property type="evidence" value="ECO:0007669"/>
    <property type="project" value="InterPro"/>
</dbReference>
<dbReference type="GO" id="GO:0000750">
    <property type="term" value="P:pheromone-dependent signal transduction involved in conjugation with cellular fusion"/>
    <property type="evidence" value="ECO:0007669"/>
    <property type="project" value="TreeGrafter"/>
</dbReference>
<dbReference type="CDD" id="cd14966">
    <property type="entry name" value="7tmD_STE3"/>
    <property type="match status" value="1"/>
</dbReference>
<dbReference type="InterPro" id="IPR000481">
    <property type="entry name" value="GPCR_Pheromne_B_alpha_rcpt"/>
</dbReference>
<dbReference type="InterPro" id="IPR001499">
    <property type="entry name" value="GPCR_STE3"/>
</dbReference>
<dbReference type="PANTHER" id="PTHR28097">
    <property type="entry name" value="PHEROMONE A FACTOR RECEPTOR"/>
    <property type="match status" value="1"/>
</dbReference>
<dbReference type="PANTHER" id="PTHR28097:SF1">
    <property type="entry name" value="PHEROMONE A FACTOR RECEPTOR"/>
    <property type="match status" value="1"/>
</dbReference>
<dbReference type="Pfam" id="PF02076">
    <property type="entry name" value="STE3"/>
    <property type="match status" value="1"/>
</dbReference>
<dbReference type="PRINTS" id="PR00899">
    <property type="entry name" value="GPCRSTE3"/>
</dbReference>
<dbReference type="PRINTS" id="PR00901">
    <property type="entry name" value="PHEROMONEBAR"/>
</dbReference>
<reference key="1">
    <citation type="journal article" date="1996" name="FEMS Microbiol. Lett.">
        <title>Allelic divergence at B alpha 1 pheromone receptor genes of Schizophyllum commune.</title>
        <authorList>
            <person name="Wendland J."/>
            <person name="Kothe E."/>
        </authorList>
    </citation>
    <scope>NUCLEOTIDE SEQUENCE [GENOMIC DNA]</scope>
    <source>
        <strain>1-69</strain>
    </source>
</reference>
<reference key="2">
    <citation type="journal article" date="1995" name="EMBO J.">
        <title>The mating-type locus B alpha 1 of Schizophyllum commune contains a pheromone receptor gene and putative pheromone genes.</title>
        <authorList>
            <person name="Wendland J."/>
            <person name="Vaillancourt L.J."/>
            <person name="Hegner J."/>
            <person name="Lengeler K.B."/>
            <person name="Laddison K.J."/>
            <person name="Specht C.A."/>
            <person name="Raper C.A."/>
            <person name="Kothe E."/>
        </authorList>
    </citation>
    <scope>NUCLEOTIDE SEQUENCE [GENOMIC DNA] OF 1-359</scope>
    <source>
        <strain>ATCC 44201 / CBS 340.81 / UVM 4-40 / 4-40</strain>
    </source>
</reference>
<keyword id="KW-0297">G-protein coupled receptor</keyword>
<keyword id="KW-0472">Membrane</keyword>
<keyword id="KW-0589">Pheromone response</keyword>
<keyword id="KW-0675">Receptor</keyword>
<keyword id="KW-0807">Transducer</keyword>
<keyword id="KW-0812">Transmembrane</keyword>
<keyword id="KW-1133">Transmembrane helix</keyword>
<protein>
    <recommendedName>
        <fullName>Pheromone B alpha 1 receptor</fullName>
    </recommendedName>
</protein>
<gene>
    <name type="primary">BAR1</name>
</gene>
<name>BAR1_SCHCO</name>
<organism>
    <name type="scientific">Schizophyllum commune</name>
    <name type="common">Split gill fungus</name>
    <dbReference type="NCBI Taxonomy" id="5334"/>
    <lineage>
        <taxon>Eukaryota</taxon>
        <taxon>Fungi</taxon>
        <taxon>Dikarya</taxon>
        <taxon>Basidiomycota</taxon>
        <taxon>Agaricomycotina</taxon>
        <taxon>Agaricomycetes</taxon>
        <taxon>Agaricomycetidae</taxon>
        <taxon>Agaricales</taxon>
        <taxon>Schizophyllaceae</taxon>
        <taxon>Schizophyllum</taxon>
    </lineage>
</organism>
<sequence>MLDPLYPLFPIFAFLGFVLAILPLPWHLQAWNSGTCFFMMWTALGCLNQFINSVAWADDAMNKAPVWCEISIRILMGASVGIPASSLCIIRRLYYIAKVRAVSKTRAEKMRAILVDALICVLFPLVYIALQYIVQGHRFNILENIGCYPAVTNTPVTYVVSYVWPVLLGLISATYGVMALLQFNKHRLQFSQFLHTHSTLSASRYLRLMALALTEMMCTMPLGIFVIVLNSKTENIQPWVSLAVTHYGFGRIDQVPAIVWRSQHLIVVCNELTRWCAPVSAFIFFFYFGFAEEARRNYAAAWRRVCRALGLPERVPSLPTTKKPFSSSDNKGSGFAEKFAAKAKGFSNFNVKDFTSEFTSKAHDFTSKAKQYTLPRPMPQTLSSSGFSSSDSTRFGSSVDGKELPSPTTKEFSSPIPIHLSGMQTLASFDSNKDLPSPPAYDIEAQYGPYNIDNRVSYHIADTGVRASYPMGVAYSSDSEHRRIVPHHSTVPHHSTADEPASPALPDTPSSCSSSATFSTLQSRDFIVLPSSADVTRRDSGSSAGGVASTSRPTRAGPPRLPSLSQLFGISSMRGQEGDVEAQGEEMAADVDVSEMVLDTLAPASIIAATTTAGAPATTTPDRGEPDVPTSPRTHRASV</sequence>
<comment type="function">
    <text>Receptor for the BAP1 pheromone, a prenylated mating factor. Has a role in the initiation of B-regulated nuclear migration.</text>
</comment>
<comment type="subcellular location">
    <subcellularLocation>
        <location>Membrane</location>
        <topology>Multi-pass membrane protein</topology>
    </subcellularLocation>
</comment>
<comment type="similarity">
    <text evidence="3">Belongs to the G-protein coupled receptor 4 family.</text>
</comment>
<proteinExistence type="inferred from homology"/>
<feature type="chain" id="PRO_0000195070" description="Pheromone B alpha 1 receptor">
    <location>
        <begin position="1"/>
        <end position="639"/>
    </location>
</feature>
<feature type="transmembrane region" description="Helical" evidence="1">
    <location>
        <begin position="8"/>
        <end position="28"/>
    </location>
</feature>
<feature type="transmembrane region" description="Helical" evidence="1">
    <location>
        <begin position="37"/>
        <end position="57"/>
    </location>
</feature>
<feature type="transmembrane region" description="Helical" evidence="1">
    <location>
        <begin position="70"/>
        <end position="90"/>
    </location>
</feature>
<feature type="transmembrane region" description="Helical" evidence="1">
    <location>
        <begin position="113"/>
        <end position="133"/>
    </location>
</feature>
<feature type="transmembrane region" description="Helical" evidence="1">
    <location>
        <begin position="163"/>
        <end position="183"/>
    </location>
</feature>
<feature type="transmembrane region" description="Helical" evidence="1">
    <location>
        <begin position="209"/>
        <end position="229"/>
    </location>
</feature>
<feature type="transmembrane region" description="Helical" evidence="1">
    <location>
        <begin position="272"/>
        <end position="292"/>
    </location>
</feature>
<feature type="region of interest" description="Disordered" evidence="2">
    <location>
        <begin position="375"/>
        <end position="416"/>
    </location>
</feature>
<feature type="region of interest" description="Disordered" evidence="2">
    <location>
        <begin position="490"/>
        <end position="516"/>
    </location>
</feature>
<feature type="region of interest" description="Disordered" evidence="2">
    <location>
        <begin position="532"/>
        <end position="563"/>
    </location>
</feature>
<feature type="region of interest" description="Disordered" evidence="2">
    <location>
        <begin position="611"/>
        <end position="639"/>
    </location>
</feature>
<feature type="compositionally biased region" description="Low complexity" evidence="2">
    <location>
        <begin position="383"/>
        <end position="398"/>
    </location>
</feature>
<feature type="compositionally biased region" description="Low complexity" evidence="2">
    <location>
        <begin position="541"/>
        <end position="551"/>
    </location>
</feature>
<feature type="compositionally biased region" description="Low complexity" evidence="2">
    <location>
        <begin position="611"/>
        <end position="621"/>
    </location>
</feature>
<feature type="sequence conflict" description="In Ref. 2; CAA54915." evidence="3" ref="2">
    <original>S</original>
    <variation>C</variation>
    <location>
        <position position="71"/>
    </location>
</feature>
<feature type="sequence conflict" description="In Ref. 2; CAA54915." evidence="3" ref="2">
    <original>K</original>
    <variation>E</variation>
    <location>
        <position position="109"/>
    </location>
</feature>
<feature type="sequence conflict" description="In Ref. 2; CAA54915." evidence="3" ref="2">
    <original>Q</original>
    <variation>R</variation>
    <location>
        <position position="131"/>
    </location>
</feature>
<feature type="sequence conflict" description="In Ref. 2." evidence="3" ref="2">
    <original>P</original>
    <variation>A</variation>
    <location>
        <position position="155"/>
    </location>
</feature>
<feature type="sequence conflict" description="In Ref. 2." evidence="3" ref="2">
    <original>T</original>
    <variation>N</variation>
    <location>
        <position position="157"/>
    </location>
</feature>
<feature type="sequence conflict" description="In Ref. 2; CAA54915." evidence="3" ref="2">
    <original>V</original>
    <variation>G</variation>
    <location>
        <position position="177"/>
    </location>
</feature>
<feature type="sequence conflict" description="In Ref. 2; CAA54915." evidence="3" ref="2">
    <original>R</original>
    <variation>K</variation>
    <location>
        <position position="304"/>
    </location>
</feature>
<feature type="sequence conflict" description="In Ref. 2; CAA54915." evidence="3" ref="2">
    <original>N</original>
    <variation>S</variation>
    <location>
        <position position="348"/>
    </location>
</feature>
<feature type="sequence conflict" description="In Ref. 2." evidence="3" ref="2">
    <original>F</original>
    <variation>L</variation>
    <location>
        <position position="358"/>
    </location>
</feature>